<name>COBQ_COREF</name>
<sequence length="493" mass="52964">MAAGPAFLIAGTTSDAGKSVITAGLCRAFARAGLRVAPFKAQNMSNNSAVTSDGGEIGRAQALQALACGLEPSVEFNPILLKPGPDNRARLVIRGREQGDVGAGDYIRHRHDLRGIAAAQLESLRERFDIVVCEGAGSPAEINLRATDVANFGLAQAAQLAVYIVGDIDRGGVLAHLFGTHAIISDEDRALIRGFVINKFRGHQELLEPGLVQLEELTGVETKAVIPFIDDIWIDAEDSLQSPVGRMVGPGGRHPLGTQRLSVAAIRLPRMLGVTDVEALAVEPGVTVTWVDDVDAVWDSDLVIIPGTTATVADLAWLRHRGLDRALGERATRGMPILGIGGGYQMMATTITDEGDSPSSVAGLALFDVHIALTPHNIMVNHGDGSYEVHHGQVRHHGEQTWIEGEGARREALFGTHRHGYLQDDPARRRFLTEVATHAGKPGFLVSPDTSFHGVRLQQLDRIADVLEEHWDLDQLLDEVSRPANAANTPETR</sequence>
<comment type="function">
    <text evidence="1">Catalyzes amidations at positions B, D, E, and G on adenosylcobyrinic A,C-diamide. NH(2) groups are provided by glutamine, and one molecule of ATP is hydrogenolyzed for each amidation.</text>
</comment>
<comment type="pathway">
    <text evidence="1">Cofactor biosynthesis; adenosylcobalamin biosynthesis.</text>
</comment>
<comment type="similarity">
    <text evidence="1">Belongs to the CobB/CobQ family. CobQ subfamily.</text>
</comment>
<organism>
    <name type="scientific">Corynebacterium efficiens (strain DSM 44549 / YS-314 / AJ 12310 / JCM 11189 / NBRC 100395)</name>
    <dbReference type="NCBI Taxonomy" id="196164"/>
    <lineage>
        <taxon>Bacteria</taxon>
        <taxon>Bacillati</taxon>
        <taxon>Actinomycetota</taxon>
        <taxon>Actinomycetes</taxon>
        <taxon>Mycobacteriales</taxon>
        <taxon>Corynebacteriaceae</taxon>
        <taxon>Corynebacterium</taxon>
    </lineage>
</organism>
<keyword id="KW-0169">Cobalamin biosynthesis</keyword>
<keyword id="KW-0315">Glutamine amidotransferase</keyword>
<keyword id="KW-1185">Reference proteome</keyword>
<dbReference type="EMBL" id="BA000035">
    <property type="protein sequence ID" value="BAC18710.1"/>
    <property type="molecule type" value="Genomic_DNA"/>
</dbReference>
<dbReference type="RefSeq" id="WP_006767902.1">
    <property type="nucleotide sequence ID" value="NC_004369.1"/>
</dbReference>
<dbReference type="SMR" id="Q8FP85"/>
<dbReference type="STRING" id="196164.gene:10742328"/>
<dbReference type="KEGG" id="cef:CE1900"/>
<dbReference type="eggNOG" id="COG1492">
    <property type="taxonomic scope" value="Bacteria"/>
</dbReference>
<dbReference type="HOGENOM" id="CLU_019250_2_2_11"/>
<dbReference type="OrthoDB" id="9808302at2"/>
<dbReference type="UniPathway" id="UPA00148"/>
<dbReference type="Proteomes" id="UP000001409">
    <property type="component" value="Chromosome"/>
</dbReference>
<dbReference type="GO" id="GO:0015420">
    <property type="term" value="F:ABC-type vitamin B12 transporter activity"/>
    <property type="evidence" value="ECO:0007669"/>
    <property type="project" value="UniProtKB-UniRule"/>
</dbReference>
<dbReference type="GO" id="GO:0003824">
    <property type="term" value="F:catalytic activity"/>
    <property type="evidence" value="ECO:0007669"/>
    <property type="project" value="InterPro"/>
</dbReference>
<dbReference type="GO" id="GO:0009236">
    <property type="term" value="P:cobalamin biosynthetic process"/>
    <property type="evidence" value="ECO:0007669"/>
    <property type="project" value="UniProtKB-UniRule"/>
</dbReference>
<dbReference type="CDD" id="cd05389">
    <property type="entry name" value="CobQ_N"/>
    <property type="match status" value="1"/>
</dbReference>
<dbReference type="CDD" id="cd01750">
    <property type="entry name" value="GATase1_CobQ"/>
    <property type="match status" value="1"/>
</dbReference>
<dbReference type="Gene3D" id="3.40.50.880">
    <property type="match status" value="1"/>
</dbReference>
<dbReference type="Gene3D" id="3.40.50.300">
    <property type="entry name" value="P-loop containing nucleotide triphosphate hydrolases"/>
    <property type="match status" value="1"/>
</dbReference>
<dbReference type="HAMAP" id="MF_00028">
    <property type="entry name" value="CobQ"/>
    <property type="match status" value="1"/>
</dbReference>
<dbReference type="InterPro" id="IPR029062">
    <property type="entry name" value="Class_I_gatase-like"/>
</dbReference>
<dbReference type="InterPro" id="IPR002586">
    <property type="entry name" value="CobQ/CobB/MinD/ParA_Nub-bd_dom"/>
</dbReference>
<dbReference type="InterPro" id="IPR033949">
    <property type="entry name" value="CobQ_GATase1"/>
</dbReference>
<dbReference type="InterPro" id="IPR047045">
    <property type="entry name" value="CobQ_N"/>
</dbReference>
<dbReference type="InterPro" id="IPR004459">
    <property type="entry name" value="CobQ_synth"/>
</dbReference>
<dbReference type="InterPro" id="IPR011698">
    <property type="entry name" value="GATase_3"/>
</dbReference>
<dbReference type="InterPro" id="IPR027417">
    <property type="entry name" value="P-loop_NTPase"/>
</dbReference>
<dbReference type="NCBIfam" id="TIGR00313">
    <property type="entry name" value="cobQ"/>
    <property type="match status" value="1"/>
</dbReference>
<dbReference type="NCBIfam" id="NF001989">
    <property type="entry name" value="PRK00784.1"/>
    <property type="match status" value="1"/>
</dbReference>
<dbReference type="PANTHER" id="PTHR21343:SF1">
    <property type="entry name" value="COBYRIC ACID SYNTHASE"/>
    <property type="match status" value="1"/>
</dbReference>
<dbReference type="PANTHER" id="PTHR21343">
    <property type="entry name" value="DETHIOBIOTIN SYNTHETASE"/>
    <property type="match status" value="1"/>
</dbReference>
<dbReference type="Pfam" id="PF01656">
    <property type="entry name" value="CbiA"/>
    <property type="match status" value="1"/>
</dbReference>
<dbReference type="Pfam" id="PF07685">
    <property type="entry name" value="GATase_3"/>
    <property type="match status" value="1"/>
</dbReference>
<dbReference type="SUPFAM" id="SSF52317">
    <property type="entry name" value="Class I glutamine amidotransferase-like"/>
    <property type="match status" value="1"/>
</dbReference>
<dbReference type="SUPFAM" id="SSF52540">
    <property type="entry name" value="P-loop containing nucleoside triphosphate hydrolases"/>
    <property type="match status" value="1"/>
</dbReference>
<dbReference type="PROSITE" id="PS51274">
    <property type="entry name" value="GATASE_COBBQ"/>
    <property type="match status" value="1"/>
</dbReference>
<accession>Q8FP85</accession>
<gene>
    <name evidence="1" type="primary">cobQ</name>
    <name type="ordered locus">CE1900</name>
</gene>
<feature type="chain" id="PRO_0000141300" description="Cobyric acid synthase">
    <location>
        <begin position="1"/>
        <end position="493"/>
    </location>
</feature>
<feature type="domain" description="GATase cobBQ-type" evidence="1">
    <location>
        <begin position="260"/>
        <end position="427"/>
    </location>
</feature>
<feature type="active site" evidence="1">
    <location>
        <position position="419"/>
    </location>
</feature>
<protein>
    <recommendedName>
        <fullName evidence="1">Cobyric acid synthase</fullName>
    </recommendedName>
</protein>
<reference key="1">
    <citation type="journal article" date="2003" name="Genome Res.">
        <title>Comparative complete genome sequence analysis of the amino acid replacements responsible for the thermostability of Corynebacterium efficiens.</title>
        <authorList>
            <person name="Nishio Y."/>
            <person name="Nakamura Y."/>
            <person name="Kawarabayasi Y."/>
            <person name="Usuda Y."/>
            <person name="Kimura E."/>
            <person name="Sugimoto S."/>
            <person name="Matsui K."/>
            <person name="Yamagishi A."/>
            <person name="Kikuchi H."/>
            <person name="Ikeo K."/>
            <person name="Gojobori T."/>
        </authorList>
    </citation>
    <scope>NUCLEOTIDE SEQUENCE [LARGE SCALE GENOMIC DNA]</scope>
    <source>
        <strain>DSM 44549 / YS-314 / AJ 12310 / JCM 11189 / NBRC 100395</strain>
    </source>
</reference>
<evidence type="ECO:0000255" key="1">
    <source>
        <dbReference type="HAMAP-Rule" id="MF_00028"/>
    </source>
</evidence>
<proteinExistence type="inferred from homology"/>